<proteinExistence type="inferred from homology"/>
<sequence length="299" mass="31551">METKTAKILDGKTLAEKIQKELTAQIIDAQAKIGRPPGLAVLMVGDNPASAAYVRNKEKSCAKVGIASFGKHFPQETTQTELEDVIAALNQDEQVDGILVQLPLPEHLDAVKLLHQIEPDKDADGLHPVNLGRLVRGEKGLRSCTPAGVMRLLAEYEISLRGKQAVVVGRSILVGKPMALMLLEADATVTIAHSRSQDLKSITQNADILIAAAGLPGLITADMVKPGAVVVDVGINRVSDAHGKSRLVGDINFASIAGVAEYITPVPGGIGPMTVALLLQNTVTSYLQTAKESGALDVK</sequence>
<evidence type="ECO:0000255" key="1">
    <source>
        <dbReference type="HAMAP-Rule" id="MF_01576"/>
    </source>
</evidence>
<organism>
    <name type="scientific">Nostoc sp. (strain PCC 7120 / SAG 25.82 / UTEX 2576)</name>
    <dbReference type="NCBI Taxonomy" id="103690"/>
    <lineage>
        <taxon>Bacteria</taxon>
        <taxon>Bacillati</taxon>
        <taxon>Cyanobacteriota</taxon>
        <taxon>Cyanophyceae</taxon>
        <taxon>Nostocales</taxon>
        <taxon>Nostocaceae</taxon>
        <taxon>Nostoc</taxon>
    </lineage>
</organism>
<name>FOLD_NOSS1</name>
<gene>
    <name evidence="1" type="primary">folD</name>
    <name type="ordered locus">alr0212</name>
</gene>
<keyword id="KW-0028">Amino-acid biosynthesis</keyword>
<keyword id="KW-0368">Histidine biosynthesis</keyword>
<keyword id="KW-0378">Hydrolase</keyword>
<keyword id="KW-0486">Methionine biosynthesis</keyword>
<keyword id="KW-0511">Multifunctional enzyme</keyword>
<keyword id="KW-0521">NADP</keyword>
<keyword id="KW-0554">One-carbon metabolism</keyword>
<keyword id="KW-0560">Oxidoreductase</keyword>
<keyword id="KW-0658">Purine biosynthesis</keyword>
<keyword id="KW-1185">Reference proteome</keyword>
<comment type="function">
    <text evidence="1">Catalyzes the oxidation of 5,10-methylenetetrahydrofolate to 5,10-methenyltetrahydrofolate and then the hydrolysis of 5,10-methenyltetrahydrofolate to 10-formyltetrahydrofolate.</text>
</comment>
<comment type="catalytic activity">
    <reaction evidence="1">
        <text>(6R)-5,10-methylene-5,6,7,8-tetrahydrofolate + NADP(+) = (6R)-5,10-methenyltetrahydrofolate + NADPH</text>
        <dbReference type="Rhea" id="RHEA:22812"/>
        <dbReference type="ChEBI" id="CHEBI:15636"/>
        <dbReference type="ChEBI" id="CHEBI:57455"/>
        <dbReference type="ChEBI" id="CHEBI:57783"/>
        <dbReference type="ChEBI" id="CHEBI:58349"/>
        <dbReference type="EC" id="1.5.1.5"/>
    </reaction>
</comment>
<comment type="catalytic activity">
    <reaction evidence="1">
        <text>(6R)-5,10-methenyltetrahydrofolate + H2O = (6R)-10-formyltetrahydrofolate + H(+)</text>
        <dbReference type="Rhea" id="RHEA:23700"/>
        <dbReference type="ChEBI" id="CHEBI:15377"/>
        <dbReference type="ChEBI" id="CHEBI:15378"/>
        <dbReference type="ChEBI" id="CHEBI:57455"/>
        <dbReference type="ChEBI" id="CHEBI:195366"/>
        <dbReference type="EC" id="3.5.4.9"/>
    </reaction>
</comment>
<comment type="pathway">
    <text evidence="1">One-carbon metabolism; tetrahydrofolate interconversion.</text>
</comment>
<comment type="subunit">
    <text evidence="1">Homodimer.</text>
</comment>
<comment type="similarity">
    <text evidence="1">Belongs to the tetrahydrofolate dehydrogenase/cyclohydrolase family.</text>
</comment>
<accession>Q8Z086</accession>
<dbReference type="EC" id="1.5.1.5" evidence="1"/>
<dbReference type="EC" id="3.5.4.9" evidence="1"/>
<dbReference type="EMBL" id="BA000019">
    <property type="protein sequence ID" value="BAB77736.1"/>
    <property type="molecule type" value="Genomic_DNA"/>
</dbReference>
<dbReference type="PIR" id="AD1833">
    <property type="entry name" value="AD1833"/>
</dbReference>
<dbReference type="RefSeq" id="WP_010994389.1">
    <property type="nucleotide sequence ID" value="NZ_RSCN01000026.1"/>
</dbReference>
<dbReference type="SMR" id="Q8Z086"/>
<dbReference type="STRING" id="103690.gene:10492219"/>
<dbReference type="KEGG" id="ana:alr0212"/>
<dbReference type="eggNOG" id="COG0190">
    <property type="taxonomic scope" value="Bacteria"/>
</dbReference>
<dbReference type="OrthoDB" id="9803580at2"/>
<dbReference type="UniPathway" id="UPA00193"/>
<dbReference type="Proteomes" id="UP000002483">
    <property type="component" value="Chromosome"/>
</dbReference>
<dbReference type="GO" id="GO:0005829">
    <property type="term" value="C:cytosol"/>
    <property type="evidence" value="ECO:0007669"/>
    <property type="project" value="TreeGrafter"/>
</dbReference>
<dbReference type="GO" id="GO:0004477">
    <property type="term" value="F:methenyltetrahydrofolate cyclohydrolase activity"/>
    <property type="evidence" value="ECO:0007669"/>
    <property type="project" value="UniProtKB-UniRule"/>
</dbReference>
<dbReference type="GO" id="GO:0004488">
    <property type="term" value="F:methylenetetrahydrofolate dehydrogenase (NADP+) activity"/>
    <property type="evidence" value="ECO:0007669"/>
    <property type="project" value="UniProtKB-UniRule"/>
</dbReference>
<dbReference type="GO" id="GO:0000105">
    <property type="term" value="P:L-histidine biosynthetic process"/>
    <property type="evidence" value="ECO:0007669"/>
    <property type="project" value="UniProtKB-KW"/>
</dbReference>
<dbReference type="GO" id="GO:0009086">
    <property type="term" value="P:methionine biosynthetic process"/>
    <property type="evidence" value="ECO:0007669"/>
    <property type="project" value="UniProtKB-KW"/>
</dbReference>
<dbReference type="GO" id="GO:0006164">
    <property type="term" value="P:purine nucleotide biosynthetic process"/>
    <property type="evidence" value="ECO:0007669"/>
    <property type="project" value="UniProtKB-KW"/>
</dbReference>
<dbReference type="GO" id="GO:0035999">
    <property type="term" value="P:tetrahydrofolate interconversion"/>
    <property type="evidence" value="ECO:0007669"/>
    <property type="project" value="UniProtKB-UniRule"/>
</dbReference>
<dbReference type="CDD" id="cd01080">
    <property type="entry name" value="NAD_bind_m-THF_DH_Cyclohyd"/>
    <property type="match status" value="1"/>
</dbReference>
<dbReference type="FunFam" id="3.40.50.720:FF:000094">
    <property type="entry name" value="Bifunctional protein FolD"/>
    <property type="match status" value="1"/>
</dbReference>
<dbReference type="FunFam" id="3.40.50.10860:FF:000005">
    <property type="entry name" value="C-1-tetrahydrofolate synthase, cytoplasmic, putative"/>
    <property type="match status" value="1"/>
</dbReference>
<dbReference type="Gene3D" id="3.40.50.10860">
    <property type="entry name" value="Leucine Dehydrogenase, chain A, domain 1"/>
    <property type="match status" value="1"/>
</dbReference>
<dbReference type="Gene3D" id="3.40.50.720">
    <property type="entry name" value="NAD(P)-binding Rossmann-like Domain"/>
    <property type="match status" value="1"/>
</dbReference>
<dbReference type="HAMAP" id="MF_01576">
    <property type="entry name" value="THF_DHG_CYH"/>
    <property type="match status" value="1"/>
</dbReference>
<dbReference type="InterPro" id="IPR046346">
    <property type="entry name" value="Aminoacid_DH-like_N_sf"/>
</dbReference>
<dbReference type="InterPro" id="IPR036291">
    <property type="entry name" value="NAD(P)-bd_dom_sf"/>
</dbReference>
<dbReference type="InterPro" id="IPR000672">
    <property type="entry name" value="THF_DH/CycHdrlase"/>
</dbReference>
<dbReference type="InterPro" id="IPR020630">
    <property type="entry name" value="THF_DH/CycHdrlase_cat_dom"/>
</dbReference>
<dbReference type="InterPro" id="IPR020867">
    <property type="entry name" value="THF_DH/CycHdrlase_CS"/>
</dbReference>
<dbReference type="InterPro" id="IPR020631">
    <property type="entry name" value="THF_DH/CycHdrlase_NAD-bd_dom"/>
</dbReference>
<dbReference type="NCBIfam" id="NF008058">
    <property type="entry name" value="PRK10792.1"/>
    <property type="match status" value="1"/>
</dbReference>
<dbReference type="NCBIfam" id="NF010783">
    <property type="entry name" value="PRK14186.1"/>
    <property type="match status" value="1"/>
</dbReference>
<dbReference type="PANTHER" id="PTHR48099:SF5">
    <property type="entry name" value="C-1-TETRAHYDROFOLATE SYNTHASE, CYTOPLASMIC"/>
    <property type="match status" value="1"/>
</dbReference>
<dbReference type="PANTHER" id="PTHR48099">
    <property type="entry name" value="C-1-TETRAHYDROFOLATE SYNTHASE, CYTOPLASMIC-RELATED"/>
    <property type="match status" value="1"/>
</dbReference>
<dbReference type="Pfam" id="PF00763">
    <property type="entry name" value="THF_DHG_CYH"/>
    <property type="match status" value="1"/>
</dbReference>
<dbReference type="Pfam" id="PF02882">
    <property type="entry name" value="THF_DHG_CYH_C"/>
    <property type="match status" value="1"/>
</dbReference>
<dbReference type="PRINTS" id="PR00085">
    <property type="entry name" value="THFDHDRGNASE"/>
</dbReference>
<dbReference type="SUPFAM" id="SSF53223">
    <property type="entry name" value="Aminoacid dehydrogenase-like, N-terminal domain"/>
    <property type="match status" value="1"/>
</dbReference>
<dbReference type="SUPFAM" id="SSF51735">
    <property type="entry name" value="NAD(P)-binding Rossmann-fold domains"/>
    <property type="match status" value="1"/>
</dbReference>
<dbReference type="PROSITE" id="PS00767">
    <property type="entry name" value="THF_DHG_CYH_2"/>
    <property type="match status" value="1"/>
</dbReference>
<feature type="chain" id="PRO_0000268257" description="Bifunctional protein FolD">
    <location>
        <begin position="1"/>
        <end position="299"/>
    </location>
</feature>
<feature type="binding site" evidence="1">
    <location>
        <begin position="169"/>
        <end position="171"/>
    </location>
    <ligand>
        <name>NADP(+)</name>
        <dbReference type="ChEBI" id="CHEBI:58349"/>
    </ligand>
</feature>
<feature type="binding site" evidence="1">
    <location>
        <position position="194"/>
    </location>
    <ligand>
        <name>NADP(+)</name>
        <dbReference type="ChEBI" id="CHEBI:58349"/>
    </ligand>
</feature>
<feature type="binding site" evidence="1">
    <location>
        <position position="235"/>
    </location>
    <ligand>
        <name>NADP(+)</name>
        <dbReference type="ChEBI" id="CHEBI:58349"/>
    </ligand>
</feature>
<reference key="1">
    <citation type="journal article" date="2001" name="DNA Res.">
        <title>Complete genomic sequence of the filamentous nitrogen-fixing cyanobacterium Anabaena sp. strain PCC 7120.</title>
        <authorList>
            <person name="Kaneko T."/>
            <person name="Nakamura Y."/>
            <person name="Wolk C.P."/>
            <person name="Kuritz T."/>
            <person name="Sasamoto S."/>
            <person name="Watanabe A."/>
            <person name="Iriguchi M."/>
            <person name="Ishikawa A."/>
            <person name="Kawashima K."/>
            <person name="Kimura T."/>
            <person name="Kishida Y."/>
            <person name="Kohara M."/>
            <person name="Matsumoto M."/>
            <person name="Matsuno A."/>
            <person name="Muraki A."/>
            <person name="Nakazaki N."/>
            <person name="Shimpo S."/>
            <person name="Sugimoto M."/>
            <person name="Takazawa M."/>
            <person name="Yamada M."/>
            <person name="Yasuda M."/>
            <person name="Tabata S."/>
        </authorList>
    </citation>
    <scope>NUCLEOTIDE SEQUENCE [LARGE SCALE GENOMIC DNA]</scope>
    <source>
        <strain>PCC 7120 / SAG 25.82 / UTEX 2576</strain>
    </source>
</reference>
<protein>
    <recommendedName>
        <fullName evidence="1">Bifunctional protein FolD</fullName>
    </recommendedName>
    <domain>
        <recommendedName>
            <fullName evidence="1">Methylenetetrahydrofolate dehydrogenase</fullName>
            <ecNumber evidence="1">1.5.1.5</ecNumber>
        </recommendedName>
    </domain>
    <domain>
        <recommendedName>
            <fullName evidence="1">Methenyltetrahydrofolate cyclohydrolase</fullName>
            <ecNumber evidence="1">3.5.4.9</ecNumber>
        </recommendedName>
    </domain>
</protein>